<dbReference type="EMBL" id="CU329672">
    <property type="protein sequence ID" value="CAB37422.1"/>
    <property type="molecule type" value="Genomic_DNA"/>
</dbReference>
<dbReference type="PIR" id="T41191">
    <property type="entry name" value="S62523"/>
</dbReference>
<dbReference type="RefSeq" id="XP_001713168.1">
    <property type="nucleotide sequence ID" value="XM_001713116.2"/>
</dbReference>
<dbReference type="SMR" id="Q09883"/>
<dbReference type="BioGRID" id="275524">
    <property type="interactions" value="4"/>
</dbReference>
<dbReference type="FunCoup" id="Q09883">
    <property type="interactions" value="6"/>
</dbReference>
<dbReference type="STRING" id="284812.Q09883"/>
<dbReference type="iPTMnet" id="Q09883"/>
<dbReference type="PaxDb" id="4896-SPCC188.12.1"/>
<dbReference type="EnsemblFungi" id="SPCC188.12.1">
    <property type="protein sequence ID" value="SPCC188.12.1:pep"/>
    <property type="gene ID" value="SPCC188.12"/>
</dbReference>
<dbReference type="PomBase" id="SPCC188.12">
    <property type="gene designation" value="spn6"/>
</dbReference>
<dbReference type="VEuPathDB" id="FungiDB:SPCC188.12"/>
<dbReference type="eggNOG" id="KOG2655">
    <property type="taxonomic scope" value="Eukaryota"/>
</dbReference>
<dbReference type="HOGENOM" id="CLU_017718_8_0_1"/>
<dbReference type="InParanoid" id="Q09883"/>
<dbReference type="OMA" id="EPCNHEL"/>
<dbReference type="PhylomeDB" id="Q09883"/>
<dbReference type="Reactome" id="R-SPO-111457">
    <property type="pathway name" value="Release of apoptotic factors from the mitochondria"/>
</dbReference>
<dbReference type="Reactome" id="R-SPO-111469">
    <property type="pathway name" value="SMAC, XIAP-regulated apoptotic response"/>
</dbReference>
<dbReference type="PRO" id="PR:Q09883"/>
<dbReference type="Proteomes" id="UP000002485">
    <property type="component" value="Chromosome III"/>
</dbReference>
<dbReference type="GO" id="GO:0032153">
    <property type="term" value="C:cell division site"/>
    <property type="evidence" value="ECO:0000318"/>
    <property type="project" value="GO_Central"/>
</dbReference>
<dbReference type="GO" id="GO:0005829">
    <property type="term" value="C:cytosol"/>
    <property type="evidence" value="ECO:0007005"/>
    <property type="project" value="PomBase"/>
</dbReference>
<dbReference type="GO" id="GO:0032175">
    <property type="term" value="C:mating projection septin ring"/>
    <property type="evidence" value="ECO:0000314"/>
    <property type="project" value="PomBase"/>
</dbReference>
<dbReference type="GO" id="GO:0032152">
    <property type="term" value="C:meiotic septin complex"/>
    <property type="evidence" value="ECO:0000314"/>
    <property type="project" value="PomBase"/>
</dbReference>
<dbReference type="GO" id="GO:0016020">
    <property type="term" value="C:membrane"/>
    <property type="evidence" value="ECO:0007669"/>
    <property type="project" value="UniProtKB-KW"/>
</dbReference>
<dbReference type="GO" id="GO:0015630">
    <property type="term" value="C:microtubule cytoskeleton"/>
    <property type="evidence" value="ECO:0000318"/>
    <property type="project" value="GO_Central"/>
</dbReference>
<dbReference type="GO" id="GO:0032169">
    <property type="term" value="C:prospore septin ring"/>
    <property type="evidence" value="ECO:0000314"/>
    <property type="project" value="PomBase"/>
</dbReference>
<dbReference type="GO" id="GO:0031105">
    <property type="term" value="C:septin complex"/>
    <property type="evidence" value="ECO:0000318"/>
    <property type="project" value="GO_Central"/>
</dbReference>
<dbReference type="GO" id="GO:0005940">
    <property type="term" value="C:septin ring"/>
    <property type="evidence" value="ECO:0000318"/>
    <property type="project" value="GO_Central"/>
</dbReference>
<dbReference type="GO" id="GO:0005525">
    <property type="term" value="F:GTP binding"/>
    <property type="evidence" value="ECO:0000255"/>
    <property type="project" value="PomBase"/>
</dbReference>
<dbReference type="GO" id="GO:0003924">
    <property type="term" value="F:GTPase activity"/>
    <property type="evidence" value="ECO:0000318"/>
    <property type="project" value="GO_Central"/>
</dbReference>
<dbReference type="GO" id="GO:0060090">
    <property type="term" value="F:molecular adaptor activity"/>
    <property type="evidence" value="ECO:0000318"/>
    <property type="project" value="GO_Central"/>
</dbReference>
<dbReference type="GO" id="GO:0061640">
    <property type="term" value="P:cytoskeleton-dependent cytokinesis"/>
    <property type="evidence" value="ECO:0000318"/>
    <property type="project" value="GO_Central"/>
</dbReference>
<dbReference type="GO" id="GO:0008104">
    <property type="term" value="P:protein localization"/>
    <property type="evidence" value="ECO:0000318"/>
    <property type="project" value="GO_Central"/>
</dbReference>
<dbReference type="GO" id="GO:0070583">
    <property type="term" value="P:spore membrane bending pathway"/>
    <property type="evidence" value="ECO:0000315"/>
    <property type="project" value="PomBase"/>
</dbReference>
<dbReference type="CDD" id="cd01850">
    <property type="entry name" value="CDC_Septin"/>
    <property type="match status" value="1"/>
</dbReference>
<dbReference type="Gene3D" id="3.40.50.300">
    <property type="entry name" value="P-loop containing nucleotide triphosphate hydrolases"/>
    <property type="match status" value="1"/>
</dbReference>
<dbReference type="InterPro" id="IPR030379">
    <property type="entry name" value="G_SEPTIN_dom"/>
</dbReference>
<dbReference type="InterPro" id="IPR027417">
    <property type="entry name" value="P-loop_NTPase"/>
</dbReference>
<dbReference type="InterPro" id="IPR016491">
    <property type="entry name" value="Septin"/>
</dbReference>
<dbReference type="PANTHER" id="PTHR18884">
    <property type="entry name" value="SEPTIN"/>
    <property type="match status" value="1"/>
</dbReference>
<dbReference type="Pfam" id="PF00735">
    <property type="entry name" value="Septin"/>
    <property type="match status" value="1"/>
</dbReference>
<dbReference type="PIRSF" id="PIRSF006698">
    <property type="entry name" value="Septin"/>
    <property type="match status" value="1"/>
</dbReference>
<dbReference type="SUPFAM" id="SSF52540">
    <property type="entry name" value="P-loop containing nucleoside triphosphate hydrolases"/>
    <property type="match status" value="1"/>
</dbReference>
<dbReference type="PROSITE" id="PS51719">
    <property type="entry name" value="G_SEPTIN"/>
    <property type="match status" value="1"/>
</dbReference>
<feature type="chain" id="PRO_0000173508" description="Septin homolog spn6">
    <location>
        <begin position="1"/>
        <end position="380"/>
    </location>
</feature>
<feature type="domain" description="Septin-type G" evidence="3">
    <location>
        <begin position="27"/>
        <end position="297"/>
    </location>
</feature>
<feature type="region of interest" description="G1 motif" evidence="3">
    <location>
        <begin position="37"/>
        <end position="44"/>
    </location>
</feature>
<feature type="region of interest" description="G3 motif" evidence="3">
    <location>
        <begin position="95"/>
        <end position="98"/>
    </location>
</feature>
<feature type="region of interest" description="G4 motif" evidence="3">
    <location>
        <begin position="176"/>
        <end position="179"/>
    </location>
</feature>
<feature type="coiled-coil region" evidence="2">
    <location>
        <begin position="304"/>
        <end position="380"/>
    </location>
</feature>
<feature type="binding site" evidence="1">
    <location>
        <begin position="37"/>
        <end position="44"/>
    </location>
    <ligand>
        <name>GTP</name>
        <dbReference type="ChEBI" id="CHEBI:37565"/>
    </ligand>
</feature>
<feature type="binding site" evidence="1">
    <location>
        <position position="72"/>
    </location>
    <ligand>
        <name>GTP</name>
        <dbReference type="ChEBI" id="CHEBI:37565"/>
    </ligand>
</feature>
<feature type="binding site" evidence="1">
    <location>
        <position position="98"/>
    </location>
    <ligand>
        <name>GTP</name>
        <dbReference type="ChEBI" id="CHEBI:37565"/>
    </ligand>
</feature>
<feature type="binding site" evidence="1">
    <location>
        <begin position="177"/>
        <end position="185"/>
    </location>
    <ligand>
        <name>GTP</name>
        <dbReference type="ChEBI" id="CHEBI:37565"/>
    </ligand>
</feature>
<feature type="binding site" evidence="1">
    <location>
        <position position="246"/>
    </location>
    <ligand>
        <name>GTP</name>
        <dbReference type="ChEBI" id="CHEBI:37565"/>
    </ligand>
</feature>
<accession>Q09883</accession>
<organism>
    <name type="scientific">Schizosaccharomyces pombe (strain 972 / ATCC 24843)</name>
    <name type="common">Fission yeast</name>
    <dbReference type="NCBI Taxonomy" id="284812"/>
    <lineage>
        <taxon>Eukaryota</taxon>
        <taxon>Fungi</taxon>
        <taxon>Dikarya</taxon>
        <taxon>Ascomycota</taxon>
        <taxon>Taphrinomycotina</taxon>
        <taxon>Schizosaccharomycetes</taxon>
        <taxon>Schizosaccharomycetales</taxon>
        <taxon>Schizosaccharomycetaceae</taxon>
        <taxon>Schizosaccharomyces</taxon>
    </lineage>
</organism>
<sequence>MSLTENLQLLLNLDSLPSKRENLIKRKECGLTIMLCGASGTGKTTFFNTLFATSLQPEKSYETAKETIAKKTLEVKKNKAVIEEDGFHINLTVLDTPGFGDFIDNTSCWNTVAEYLDEQHERYLIHDQNSLRVPRKDTRVHVCLYFITPVSFGMLPLDVLAMKELSTHVNLVPVIAKADTFTTPELTQIKQKIRRILEAQSIDVFHPSTEYSDYETAELLDSSLPYAIISSVNEVCKDDGEKSQGRRYPWGTSEIYEETHCDFLKLKKLLINRHMLELINTTETNIYERYRREQLTNRKSGIPKLKKEHYERLNNEKRAIQQKITQMTNETESFFQAKEEKMIETRDALNSELSEYHERIRALETQIESLKSYKGRGHKK</sequence>
<name>SPN6_SCHPO</name>
<reference key="1">
    <citation type="journal article" date="2002" name="Nature">
        <title>The genome sequence of Schizosaccharomyces pombe.</title>
        <authorList>
            <person name="Wood V."/>
            <person name="Gwilliam R."/>
            <person name="Rajandream M.A."/>
            <person name="Lyne M.H."/>
            <person name="Lyne R."/>
            <person name="Stewart A."/>
            <person name="Sgouros J.G."/>
            <person name="Peat N."/>
            <person name="Hayles J."/>
            <person name="Baker S.G."/>
            <person name="Basham D."/>
            <person name="Bowman S."/>
            <person name="Brooks K."/>
            <person name="Brown D."/>
            <person name="Brown S."/>
            <person name="Chillingworth T."/>
            <person name="Churcher C.M."/>
            <person name="Collins M."/>
            <person name="Connor R."/>
            <person name="Cronin A."/>
            <person name="Davis P."/>
            <person name="Feltwell T."/>
            <person name="Fraser A."/>
            <person name="Gentles S."/>
            <person name="Goble A."/>
            <person name="Hamlin N."/>
            <person name="Harris D.E."/>
            <person name="Hidalgo J."/>
            <person name="Hodgson G."/>
            <person name="Holroyd S."/>
            <person name="Hornsby T."/>
            <person name="Howarth S."/>
            <person name="Huckle E.J."/>
            <person name="Hunt S."/>
            <person name="Jagels K."/>
            <person name="James K.D."/>
            <person name="Jones L."/>
            <person name="Jones M."/>
            <person name="Leather S."/>
            <person name="McDonald S."/>
            <person name="McLean J."/>
            <person name="Mooney P."/>
            <person name="Moule S."/>
            <person name="Mungall K.L."/>
            <person name="Murphy L.D."/>
            <person name="Niblett D."/>
            <person name="Odell C."/>
            <person name="Oliver K."/>
            <person name="O'Neil S."/>
            <person name="Pearson D."/>
            <person name="Quail M.A."/>
            <person name="Rabbinowitsch E."/>
            <person name="Rutherford K.M."/>
            <person name="Rutter S."/>
            <person name="Saunders D."/>
            <person name="Seeger K."/>
            <person name="Sharp S."/>
            <person name="Skelton J."/>
            <person name="Simmonds M.N."/>
            <person name="Squares R."/>
            <person name="Squares S."/>
            <person name="Stevens K."/>
            <person name="Taylor K."/>
            <person name="Taylor R.G."/>
            <person name="Tivey A."/>
            <person name="Walsh S.V."/>
            <person name="Warren T."/>
            <person name="Whitehead S."/>
            <person name="Woodward J.R."/>
            <person name="Volckaert G."/>
            <person name="Aert R."/>
            <person name="Robben J."/>
            <person name="Grymonprez B."/>
            <person name="Weltjens I."/>
            <person name="Vanstreels E."/>
            <person name="Rieger M."/>
            <person name="Schaefer M."/>
            <person name="Mueller-Auer S."/>
            <person name="Gabel C."/>
            <person name="Fuchs M."/>
            <person name="Duesterhoeft A."/>
            <person name="Fritzc C."/>
            <person name="Holzer E."/>
            <person name="Moestl D."/>
            <person name="Hilbert H."/>
            <person name="Borzym K."/>
            <person name="Langer I."/>
            <person name="Beck A."/>
            <person name="Lehrach H."/>
            <person name="Reinhardt R."/>
            <person name="Pohl T.M."/>
            <person name="Eger P."/>
            <person name="Zimmermann W."/>
            <person name="Wedler H."/>
            <person name="Wambutt R."/>
            <person name="Purnelle B."/>
            <person name="Goffeau A."/>
            <person name="Cadieu E."/>
            <person name="Dreano S."/>
            <person name="Gloux S."/>
            <person name="Lelaure V."/>
            <person name="Mottier S."/>
            <person name="Galibert F."/>
            <person name="Aves S.J."/>
            <person name="Xiang Z."/>
            <person name="Hunt C."/>
            <person name="Moore K."/>
            <person name="Hurst S.M."/>
            <person name="Lucas M."/>
            <person name="Rochet M."/>
            <person name="Gaillardin C."/>
            <person name="Tallada V.A."/>
            <person name="Garzon A."/>
            <person name="Thode G."/>
            <person name="Daga R.R."/>
            <person name="Cruzado L."/>
            <person name="Jimenez J."/>
            <person name="Sanchez M."/>
            <person name="del Rey F."/>
            <person name="Benito J."/>
            <person name="Dominguez A."/>
            <person name="Revuelta J.L."/>
            <person name="Moreno S."/>
            <person name="Armstrong J."/>
            <person name="Forsburg S.L."/>
            <person name="Cerutti L."/>
            <person name="Lowe T."/>
            <person name="McCombie W.R."/>
            <person name="Paulsen I."/>
            <person name="Potashkin J."/>
            <person name="Shpakovski G.V."/>
            <person name="Ussery D."/>
            <person name="Barrell B.G."/>
            <person name="Nurse P."/>
        </authorList>
    </citation>
    <scope>NUCLEOTIDE SEQUENCE [LARGE SCALE GENOMIC DNA]</scope>
    <source>
        <strain>972 / ATCC 24843</strain>
    </source>
</reference>
<reference key="2">
    <citation type="submission" date="2001-03" db="UniProtKB">
        <authorList>
            <person name="Wu J.-Q."/>
            <person name="Pringle J.R."/>
        </authorList>
    </citation>
    <scope>CHARACTERIZATION</scope>
</reference>
<reference key="3">
    <citation type="journal article" date="2006" name="Nat. Biotechnol.">
        <title>ORFeome cloning and global analysis of protein localization in the fission yeast Schizosaccharomyces pombe.</title>
        <authorList>
            <person name="Matsuyama A."/>
            <person name="Arai R."/>
            <person name="Yashiroda Y."/>
            <person name="Shirai A."/>
            <person name="Kamata A."/>
            <person name="Sekido S."/>
            <person name="Kobayashi Y."/>
            <person name="Hashimoto A."/>
            <person name="Hamamoto M."/>
            <person name="Hiraoka Y."/>
            <person name="Horinouchi S."/>
            <person name="Yoshida M."/>
        </authorList>
    </citation>
    <scope>SUBCELLULAR LOCATION [LARGE SCALE ANALYSIS]</scope>
</reference>
<reference key="4">
    <citation type="journal article" date="2010" name="Mol. Cell. Biol.">
        <title>Role of septins in the orientation of forespore membrane extension during sporulation in fission yeast.</title>
        <authorList>
            <person name="Onishi M."/>
            <person name="Koga T."/>
            <person name="Hirata A."/>
            <person name="Nakamura T."/>
            <person name="Asakawa H."/>
            <person name="Shimoda C."/>
            <person name="Bahler J."/>
            <person name="Wu J.Q."/>
            <person name="Takegawa K."/>
            <person name="Tachikawa H."/>
            <person name="Pringle J.R."/>
            <person name="Fukui Y."/>
        </authorList>
    </citation>
    <scope>FUNCTION</scope>
    <scope>SUBCELLULAR LOCATION</scope>
    <scope>IDENTIFICATION IN THE SPORULATION-SPECIFIC SEPTIN COMPLEX</scope>
</reference>
<keyword id="KW-0175">Coiled coil</keyword>
<keyword id="KW-0963">Cytoplasm</keyword>
<keyword id="KW-0342">GTP-binding</keyword>
<keyword id="KW-0469">Meiosis</keyword>
<keyword id="KW-0472">Membrane</keyword>
<keyword id="KW-0547">Nucleotide-binding</keyword>
<keyword id="KW-1185">Reference proteome</keyword>
<keyword id="KW-0749">Sporulation</keyword>
<protein>
    <recommendedName>
        <fullName>Septin homolog spn6</fullName>
    </recommendedName>
</protein>
<evidence type="ECO:0000250" key="1"/>
<evidence type="ECO:0000255" key="2"/>
<evidence type="ECO:0000255" key="3">
    <source>
        <dbReference type="PROSITE-ProRule" id="PRU01056"/>
    </source>
</evidence>
<evidence type="ECO:0000269" key="4">
    <source>
    </source>
</evidence>
<comment type="function">
    <text evidence="4">Septin-like protein involved in the correct orientation of forespore membrane extension during sporulation.</text>
</comment>
<comment type="subunit">
    <text evidence="4">Component of the sporulation-specific septin complex composed of at least spn2, spn5, spn6 and spn7.</text>
</comment>
<comment type="subcellular location">
    <subcellularLocation>
        <location>Cytoplasm</location>
    </subcellularLocation>
    <subcellularLocation>
        <location>Forespore membrane</location>
        <topology>Peripheral membrane protein</topology>
    </subcellularLocation>
    <text>The sporulation-specific septin complex associates to the forespore membrane and forms partial or complete ring-like structures that curl around each haploid nucleus.</text>
</comment>
<comment type="similarity">
    <text evidence="3">Belongs to the TRAFAC class TrmE-Era-EngA-EngB-Septin-like GTPase superfamily. Septin GTPase family.</text>
</comment>
<gene>
    <name type="primary">spn6</name>
    <name type="ORF">SPCC188.12</name>
    <name type="ORF">SPCC584.09</name>
</gene>
<proteinExistence type="evidence at protein level"/>